<dbReference type="EMBL" id="CP002685">
    <property type="protein sequence ID" value="AEC10495.1"/>
    <property type="molecule type" value="Genomic_DNA"/>
</dbReference>
<dbReference type="EMBL" id="AY133874">
    <property type="protein sequence ID" value="AAM91808.1"/>
    <property type="molecule type" value="mRNA"/>
</dbReference>
<dbReference type="EMBL" id="AY074646">
    <property type="protein sequence ID" value="AAL69462.1"/>
    <property type="status" value="ALT_SEQ"/>
    <property type="molecule type" value="mRNA"/>
</dbReference>
<dbReference type="EMBL" id="AY080620">
    <property type="protein sequence ID" value="AAL86303.1"/>
    <property type="status" value="ALT_SEQ"/>
    <property type="molecule type" value="mRNA"/>
</dbReference>
<dbReference type="PIR" id="D84885">
    <property type="entry name" value="D84885"/>
</dbReference>
<dbReference type="RefSeq" id="NP_850429.1">
    <property type="nucleotide sequence ID" value="NM_180098.3"/>
</dbReference>
<dbReference type="SMR" id="Q8L7F7"/>
<dbReference type="BioGRID" id="4444">
    <property type="interactions" value="13"/>
</dbReference>
<dbReference type="FunCoup" id="Q8L7F7">
    <property type="interactions" value="720"/>
</dbReference>
<dbReference type="IntAct" id="Q8L7F7">
    <property type="interactions" value="2"/>
</dbReference>
<dbReference type="STRING" id="3702.Q8L7F7"/>
<dbReference type="GlyGen" id="Q8L7F7">
    <property type="glycosylation" value="10 sites"/>
</dbReference>
<dbReference type="iPTMnet" id="Q8L7F7"/>
<dbReference type="PaxDb" id="3702-AT2G45000.1"/>
<dbReference type="ProteomicsDB" id="248890"/>
<dbReference type="EnsemblPlants" id="AT2G45000.1">
    <property type="protein sequence ID" value="AT2G45000.1"/>
    <property type="gene ID" value="AT2G45000"/>
</dbReference>
<dbReference type="GeneID" id="819108"/>
<dbReference type="Gramene" id="AT2G45000.1">
    <property type="protein sequence ID" value="AT2G45000.1"/>
    <property type="gene ID" value="AT2G45000"/>
</dbReference>
<dbReference type="KEGG" id="ath:AT2G45000"/>
<dbReference type="Araport" id="AT2G45000"/>
<dbReference type="TAIR" id="AT2G45000">
    <property type="gene designation" value="EMB2766"/>
</dbReference>
<dbReference type="eggNOG" id="KOG2196">
    <property type="taxonomic scope" value="Eukaryota"/>
</dbReference>
<dbReference type="HOGENOM" id="CLU_389544_0_0_1"/>
<dbReference type="InParanoid" id="Q8L7F7"/>
<dbReference type="OMA" id="EMMSKQV"/>
<dbReference type="CD-CODE" id="4299E36E">
    <property type="entry name" value="Nucleolus"/>
</dbReference>
<dbReference type="PRO" id="PR:Q8L7F7"/>
<dbReference type="Proteomes" id="UP000006548">
    <property type="component" value="Chromosome 2"/>
</dbReference>
<dbReference type="ExpressionAtlas" id="Q8L7F7">
    <property type="expression patterns" value="baseline and differential"/>
</dbReference>
<dbReference type="GO" id="GO:0005829">
    <property type="term" value="C:cytosol"/>
    <property type="evidence" value="ECO:0007005"/>
    <property type="project" value="TAIR"/>
</dbReference>
<dbReference type="GO" id="GO:0005635">
    <property type="term" value="C:nuclear envelope"/>
    <property type="evidence" value="ECO:0000314"/>
    <property type="project" value="TAIR"/>
</dbReference>
<dbReference type="GO" id="GO:0034399">
    <property type="term" value="C:nuclear periphery"/>
    <property type="evidence" value="ECO:0000314"/>
    <property type="project" value="TAIR"/>
</dbReference>
<dbReference type="GO" id="GO:0005643">
    <property type="term" value="C:nuclear pore"/>
    <property type="evidence" value="ECO:0007669"/>
    <property type="project" value="UniProtKB-SubCell"/>
</dbReference>
<dbReference type="GO" id="GO:0017056">
    <property type="term" value="F:structural constituent of nuclear pore"/>
    <property type="evidence" value="ECO:0007669"/>
    <property type="project" value="InterPro"/>
</dbReference>
<dbReference type="GO" id="GO:0051028">
    <property type="term" value="P:mRNA transport"/>
    <property type="evidence" value="ECO:0007669"/>
    <property type="project" value="UniProtKB-KW"/>
</dbReference>
<dbReference type="GO" id="GO:0010930">
    <property type="term" value="P:negative regulation of auxin mediated signaling pathway"/>
    <property type="evidence" value="ECO:0000316"/>
    <property type="project" value="TAIR"/>
</dbReference>
<dbReference type="GO" id="GO:0015031">
    <property type="term" value="P:protein transport"/>
    <property type="evidence" value="ECO:0007669"/>
    <property type="project" value="UniProtKB-KW"/>
</dbReference>
<dbReference type="FunFam" id="1.20.5.170:FF:000040">
    <property type="entry name" value="Nuclear pore glycoprotein p62"/>
    <property type="match status" value="1"/>
</dbReference>
<dbReference type="Gene3D" id="1.20.5.170">
    <property type="match status" value="1"/>
</dbReference>
<dbReference type="InterPro" id="IPR026010">
    <property type="entry name" value="NSP1/NUP62"/>
</dbReference>
<dbReference type="InterPro" id="IPR007758">
    <property type="entry name" value="Nucleoporin_NSP1_C"/>
</dbReference>
<dbReference type="PANTHER" id="PTHR12084:SF0">
    <property type="entry name" value="NUCLEAR PORE GLYCOPROTEIN P62"/>
    <property type="match status" value="1"/>
</dbReference>
<dbReference type="PANTHER" id="PTHR12084">
    <property type="entry name" value="NUCLEAR PORE GLYCOPROTEIN P62-RELATED"/>
    <property type="match status" value="1"/>
</dbReference>
<dbReference type="Pfam" id="PF05064">
    <property type="entry name" value="Nsp1_C"/>
    <property type="match status" value="1"/>
</dbReference>
<accession>Q8L7F7</accession>
<accession>Q9SHD8</accession>
<organism evidence="11">
    <name type="scientific">Arabidopsis thaliana</name>
    <name type="common">Mouse-ear cress</name>
    <dbReference type="NCBI Taxonomy" id="3702"/>
    <lineage>
        <taxon>Eukaryota</taxon>
        <taxon>Viridiplantae</taxon>
        <taxon>Streptophyta</taxon>
        <taxon>Embryophyta</taxon>
        <taxon>Tracheophyta</taxon>
        <taxon>Spermatophyta</taxon>
        <taxon>Magnoliopsida</taxon>
        <taxon>eudicotyledons</taxon>
        <taxon>Gunneridae</taxon>
        <taxon>Pentapetalae</taxon>
        <taxon>rosids</taxon>
        <taxon>malvids</taxon>
        <taxon>Brassicales</taxon>
        <taxon>Brassicaceae</taxon>
        <taxon>Camelineae</taxon>
        <taxon>Arabidopsis</taxon>
    </lineage>
</organism>
<gene>
    <name evidence="6" type="primary">NUP62</name>
    <name evidence="12" type="synonym">EMB2766</name>
    <name evidence="9" type="ordered locus">At2g45000</name>
    <name evidence="10" type="ORF">T14P1.20</name>
</gene>
<name>NUP62_ARATH</name>
<proteinExistence type="evidence at protein level"/>
<comment type="subunit">
    <text evidence="4 5 8">Part of the nuclear pore complex (NPC). The NPC has an eight-fold symmetrical structure comprising a central transport channel and two rings, the cytoplasmic and nuclear rings, to which eight filaments are attached. The cytoplasmic filaments have loose ends, while the nuclear filaments are joined in a distal ring, forming a nuclear basket. NPCs are highly dynamic in configuration and composition, and can be devided in 3 subcomplexes, the NUP62 subcomplex, the NUP107-160 subcomplex and the NUP93 subcomplex, containing approximately 30 different nucleoporin proteins. Interacts with NUP58 and the importin KPNB1.</text>
</comment>
<comment type="subcellular location">
    <subcellularLocation>
        <location evidence="3">Nucleus envelope</location>
    </subcellularLocation>
    <subcellularLocation>
        <location evidence="8">Nucleus</location>
        <location evidence="8">Nuclear pore complex</location>
    </subcellularLocation>
</comment>
<comment type="domain">
    <text evidence="7">Contains FG repeats.</text>
</comment>
<comment type="similarity">
    <text evidence="7">Belongs to the nucleoporin NSP1/NUP62 family.</text>
</comment>
<comment type="sequence caution" evidence="7">
    <conflict type="erroneous translation">
        <sequence resource="EMBL-CDS" id="AAL69462"/>
    </conflict>
    <text>Wrong choice of frame.</text>
</comment>
<comment type="sequence caution" evidence="7">
    <conflict type="erroneous translation">
        <sequence resource="EMBL-CDS" id="AAL86303"/>
    </conflict>
    <text>Wrong choice of frame.</text>
</comment>
<protein>
    <recommendedName>
        <fullName evidence="6">Nuclear pore complex protein NUP62</fullName>
    </recommendedName>
    <alternativeName>
        <fullName evidence="12">Nucleoporin 62</fullName>
        <shortName>NP62</shortName>
    </alternativeName>
    <alternativeName>
        <fullName>Protein EMBRYO DEFECTIVE 2766</fullName>
    </alternativeName>
</protein>
<evidence type="ECO:0000255" key="1"/>
<evidence type="ECO:0000256" key="2">
    <source>
        <dbReference type="SAM" id="MobiDB-lite"/>
    </source>
</evidence>
<evidence type="ECO:0000269" key="3">
    <source>
    </source>
</evidence>
<evidence type="ECO:0000269" key="4">
    <source>
    </source>
</evidence>
<evidence type="ECO:0000269" key="5">
    <source>
    </source>
</evidence>
<evidence type="ECO:0000303" key="6">
    <source>
    </source>
</evidence>
<evidence type="ECO:0000305" key="7"/>
<evidence type="ECO:0000305" key="8">
    <source>
    </source>
</evidence>
<evidence type="ECO:0000312" key="9">
    <source>
        <dbReference type="Araport" id="AT2G45000"/>
    </source>
</evidence>
<evidence type="ECO:0000312" key="10">
    <source>
        <dbReference type="EMBL" id="AAL69462.1"/>
    </source>
</evidence>
<evidence type="ECO:0000312" key="11">
    <source>
        <dbReference type="EMBL" id="AAM91808.1"/>
    </source>
</evidence>
<evidence type="ECO:0000312" key="12">
    <source>
        <dbReference type="EMBL" id="AEC10495.1"/>
    </source>
</evidence>
<sequence length="739" mass="73482">MSGFPFGQSNSVGGFSFGSSSATNSSSASSTTSPLSFSFNQSSNPSSTGFGFGSSVSSTPASSTTPSFGFGASSTPSFGFGSSASSSTPSFGFGSSASVTPASTTPSFGFGTAASSSAPAPSLFGSSTTNASSAAPGSSPFGFVTSSASSTATPSSSLFGAPASSAATPSSSPFGAAPASGSTPLFGSSPSLFSAPSSASASNSSLFGASSSAATSTSPLFGAPSSATGATPSFSVASSAPGSSSSIFGATGSSPSFSVASSASGSSPSIFGATGSSPFFGSSSSAGSTPSLFASSSSGATTSSPSPFGVSTFNSSSTSNTSNASASPFSASTGFSFLKSTASSTTSSTTPSAPPQTASSSSSFSFGTSANSGFNLSTGSSAAPASSTSGAVFSIATTTTTSSSTPAATSAPASSAPASTMAFPSFGVTSSATNTTPASSAATFSTTGFGLASSTPATGSTNSFTGFAVPKTSTPASSSQPQTTSPAFSFSLPSSTSTTAPATSSATTTQTTLVVPSSSGTSTAVAPVAGSPKLPSEITGKTVEEIIKEWNTELQERTGRFRKQANAIAEWDKRILQNRDVLLRLEIEVAKVVETQSSLERQLELIETHQQEVDKALQSMEEEAERIYNDERKSLLDDEAASTRDAMYEQSELVERELEHMTEQIRSIIQSVNANQGGELEAIDGMSPLDVVVRILNNQLSSLMWIDEKAEEFSSRIQKIALQGSGGDRELMAPKHWMS</sequence>
<reference key="1">
    <citation type="journal article" date="1999" name="Nature">
        <title>Sequence and analysis of chromosome 2 of the plant Arabidopsis thaliana.</title>
        <authorList>
            <person name="Lin X."/>
            <person name="Kaul S."/>
            <person name="Rounsley S.D."/>
            <person name="Shea T.P."/>
            <person name="Benito M.-I."/>
            <person name="Town C.D."/>
            <person name="Fujii C.Y."/>
            <person name="Mason T.M."/>
            <person name="Bowman C.L."/>
            <person name="Barnstead M.E."/>
            <person name="Feldblyum T.V."/>
            <person name="Buell C.R."/>
            <person name="Ketchum K.A."/>
            <person name="Lee J.J."/>
            <person name="Ronning C.M."/>
            <person name="Koo H.L."/>
            <person name="Moffat K.S."/>
            <person name="Cronin L.A."/>
            <person name="Shen M."/>
            <person name="Pai G."/>
            <person name="Van Aken S."/>
            <person name="Umayam L."/>
            <person name="Tallon L.J."/>
            <person name="Gill J.E."/>
            <person name="Adams M.D."/>
            <person name="Carrera A.J."/>
            <person name="Creasy T.H."/>
            <person name="Goodman H.M."/>
            <person name="Somerville C.R."/>
            <person name="Copenhaver G.P."/>
            <person name="Preuss D."/>
            <person name="Nierman W.C."/>
            <person name="White O."/>
            <person name="Eisen J.A."/>
            <person name="Salzberg S.L."/>
            <person name="Fraser C.M."/>
            <person name="Venter J.C."/>
        </authorList>
    </citation>
    <scope>NUCLEOTIDE SEQUENCE [LARGE SCALE GENOMIC DNA]</scope>
    <source>
        <strain>cv. Columbia</strain>
    </source>
</reference>
<reference key="2">
    <citation type="journal article" date="2017" name="Plant J.">
        <title>Araport11: a complete reannotation of the Arabidopsis thaliana reference genome.</title>
        <authorList>
            <person name="Cheng C.Y."/>
            <person name="Krishnakumar V."/>
            <person name="Chan A.P."/>
            <person name="Thibaud-Nissen F."/>
            <person name="Schobel S."/>
            <person name="Town C.D."/>
        </authorList>
    </citation>
    <scope>GENOME REANNOTATION</scope>
    <source>
        <strain>cv. Columbia</strain>
    </source>
</reference>
<reference key="3">
    <citation type="journal article" date="2003" name="Science">
        <title>Empirical analysis of transcriptional activity in the Arabidopsis genome.</title>
        <authorList>
            <person name="Yamada K."/>
            <person name="Lim J."/>
            <person name="Dale J.M."/>
            <person name="Chen H."/>
            <person name="Shinn P."/>
            <person name="Palm C.J."/>
            <person name="Southwick A.M."/>
            <person name="Wu H.C."/>
            <person name="Kim C.J."/>
            <person name="Nguyen M."/>
            <person name="Pham P.K."/>
            <person name="Cheuk R.F."/>
            <person name="Karlin-Newmann G."/>
            <person name="Liu S.X."/>
            <person name="Lam B."/>
            <person name="Sakano H."/>
            <person name="Wu T."/>
            <person name="Yu G."/>
            <person name="Miranda M."/>
            <person name="Quach H.L."/>
            <person name="Tripp M."/>
            <person name="Chang C.H."/>
            <person name="Lee J.M."/>
            <person name="Toriumi M.J."/>
            <person name="Chan M.M."/>
            <person name="Tang C.C."/>
            <person name="Onodera C.S."/>
            <person name="Deng J.M."/>
            <person name="Akiyama K."/>
            <person name="Ansari Y."/>
            <person name="Arakawa T."/>
            <person name="Banh J."/>
            <person name="Banno F."/>
            <person name="Bowser L."/>
            <person name="Brooks S.Y."/>
            <person name="Carninci P."/>
            <person name="Chao Q."/>
            <person name="Choy N."/>
            <person name="Enju A."/>
            <person name="Goldsmith A.D."/>
            <person name="Gurjal M."/>
            <person name="Hansen N.F."/>
            <person name="Hayashizaki Y."/>
            <person name="Johnson-Hopson C."/>
            <person name="Hsuan V.W."/>
            <person name="Iida K."/>
            <person name="Karnes M."/>
            <person name="Khan S."/>
            <person name="Koesema E."/>
            <person name="Ishida J."/>
            <person name="Jiang P.X."/>
            <person name="Jones T."/>
            <person name="Kawai J."/>
            <person name="Kamiya A."/>
            <person name="Meyers C."/>
            <person name="Nakajima M."/>
            <person name="Narusaka M."/>
            <person name="Seki M."/>
            <person name="Sakurai T."/>
            <person name="Satou M."/>
            <person name="Tamse R."/>
            <person name="Vaysberg M."/>
            <person name="Wallender E.K."/>
            <person name="Wong C."/>
            <person name="Yamamura Y."/>
            <person name="Yuan S."/>
            <person name="Shinozaki K."/>
            <person name="Davis R.W."/>
            <person name="Theologis A."/>
            <person name="Ecker J.R."/>
        </authorList>
    </citation>
    <scope>NUCLEOTIDE SEQUENCE [LARGE SCALE MRNA]</scope>
    <source>
        <strain>cv. Columbia</strain>
    </source>
</reference>
<reference key="4">
    <citation type="journal article" date="2010" name="Plant Cell">
        <title>Identification and characterization of nuclear pore complex components in Arabidopsis thaliana.</title>
        <authorList>
            <person name="Tamura K."/>
            <person name="Fukao Y."/>
            <person name="Iwamoto M."/>
            <person name="Haraguchi T."/>
            <person name="Hara-Nishimura I."/>
        </authorList>
    </citation>
    <scope>IDENTIFICATION IN THE NUCLEAR PORE COMPLEX BY MASS SPECTROMETRY</scope>
    <scope>SUBCELLULAR LOCATION</scope>
    <scope>NOMENCLATURE</scope>
</reference>
<reference key="5">
    <citation type="journal article" date="2013" name="Plant J.">
        <title>An Arabidopsis homolog of importin beta1 is required for ABA response and drought tolerance.</title>
        <authorList>
            <person name="Luo Y."/>
            <person name="Wang Z."/>
            <person name="Ji H."/>
            <person name="Fang H."/>
            <person name="Wang S."/>
            <person name="Tian L."/>
            <person name="Li X."/>
        </authorList>
    </citation>
    <scope>INTERACTION WITH KPNB1</scope>
</reference>
<reference key="6">
    <citation type="journal article" date="2013" name="PLoS ONE">
        <title>Arabidopsis TRANSCURVATA1 encodes NUP58, a component of the nucleopore central channel.</title>
        <authorList>
            <person name="Ferrandez-Ayela A."/>
            <person name="Alonso-Peral M.M."/>
            <person name="Sanchez-Garcia A.B."/>
            <person name="Micol-Ponce R."/>
            <person name="Perez-Perez J.M."/>
            <person name="Micol J.L."/>
            <person name="Ponce M.R."/>
        </authorList>
    </citation>
    <scope>INTERACTION WITH NUP58</scope>
</reference>
<feature type="chain" id="PRO_0000431084" description="Nuclear pore complex protein NUP62">
    <location>
        <begin position="1"/>
        <end position="739"/>
    </location>
</feature>
<feature type="repeat" description="1">
    <location>
        <begin position="6"/>
        <end position="7"/>
    </location>
</feature>
<feature type="repeat" description="2">
    <location>
        <begin position="17"/>
        <end position="18"/>
    </location>
</feature>
<feature type="repeat" description="3">
    <location>
        <begin position="50"/>
        <end position="51"/>
    </location>
</feature>
<feature type="repeat" description="4">
    <location>
        <begin position="52"/>
        <end position="53"/>
    </location>
</feature>
<feature type="repeat" description="5">
    <location>
        <begin position="68"/>
        <end position="69"/>
    </location>
</feature>
<feature type="repeat" description="6">
    <location>
        <begin position="70"/>
        <end position="71"/>
    </location>
</feature>
<feature type="repeat" description="7">
    <location>
        <begin position="78"/>
        <end position="79"/>
    </location>
</feature>
<feature type="repeat" description="8">
    <location>
        <begin position="80"/>
        <end position="81"/>
    </location>
</feature>
<feature type="repeat" description="9">
    <location>
        <begin position="91"/>
        <end position="92"/>
    </location>
</feature>
<feature type="repeat" description="10">
    <location>
        <begin position="93"/>
        <end position="94"/>
    </location>
</feature>
<feature type="repeat" description="11">
    <location>
        <begin position="108"/>
        <end position="109"/>
    </location>
</feature>
<feature type="repeat" description="12">
    <location>
        <begin position="110"/>
        <end position="111"/>
    </location>
</feature>
<feature type="repeat" description="13">
    <location>
        <begin position="124"/>
        <end position="125"/>
    </location>
</feature>
<feature type="repeat" description="14">
    <location>
        <begin position="141"/>
        <end position="142"/>
    </location>
</feature>
<feature type="repeat" description="15">
    <location>
        <begin position="159"/>
        <end position="160"/>
    </location>
</feature>
<feature type="repeat" description="16">
    <location>
        <begin position="174"/>
        <end position="175"/>
    </location>
</feature>
<feature type="repeat" description="17">
    <location>
        <begin position="186"/>
        <end position="187"/>
    </location>
</feature>
<feature type="repeat" description="18">
    <location>
        <begin position="207"/>
        <end position="208"/>
    </location>
</feature>
<feature type="repeat" description="19">
    <location>
        <begin position="221"/>
        <end position="222"/>
    </location>
</feature>
<feature type="repeat" description="20">
    <location>
        <begin position="248"/>
        <end position="249"/>
    </location>
</feature>
<feature type="repeat" description="21">
    <location>
        <begin position="271"/>
        <end position="272"/>
    </location>
</feature>
<feature type="repeat" description="22">
    <location>
        <begin position="280"/>
        <end position="281"/>
    </location>
</feature>
<feature type="repeat" description="23">
    <location>
        <begin position="308"/>
        <end position="309"/>
    </location>
</feature>
<feature type="repeat" description="24">
    <location>
        <begin position="366"/>
        <end position="367"/>
    </location>
</feature>
<feature type="repeat" description="25">
    <location>
        <begin position="426"/>
        <end position="427"/>
    </location>
</feature>
<feature type="repeat" description="26">
    <location>
        <begin position="449"/>
        <end position="450"/>
    </location>
</feature>
<feature type="region of interest" description="26 X 2 AA repeats of F-G">
    <location>
        <begin position="6"/>
        <end position="450"/>
    </location>
</feature>
<feature type="region of interest" description="Disordered" evidence="2">
    <location>
        <begin position="18"/>
        <end position="67"/>
    </location>
</feature>
<feature type="region of interest" description="Disordered" evidence="2">
    <location>
        <begin position="79"/>
        <end position="245"/>
    </location>
</feature>
<feature type="region of interest" description="Disordered" evidence="2">
    <location>
        <begin position="281"/>
        <end position="329"/>
    </location>
</feature>
<feature type="region of interest" description="Disordered" evidence="2">
    <location>
        <begin position="341"/>
        <end position="366"/>
    </location>
</feature>
<feature type="region of interest" description="Disordered" evidence="2">
    <location>
        <begin position="399"/>
        <end position="418"/>
    </location>
</feature>
<feature type="region of interest" description="Disordered" evidence="2">
    <location>
        <begin position="471"/>
        <end position="533"/>
    </location>
</feature>
<feature type="coiled-coil region" evidence="1">
    <location>
        <begin position="584"/>
        <end position="674"/>
    </location>
</feature>
<feature type="compositionally biased region" description="Low complexity" evidence="2">
    <location>
        <begin position="79"/>
        <end position="218"/>
    </location>
</feature>
<feature type="compositionally biased region" description="Low complexity" evidence="2">
    <location>
        <begin position="232"/>
        <end position="245"/>
    </location>
</feature>
<feature type="compositionally biased region" description="Low complexity" evidence="2">
    <location>
        <begin position="472"/>
        <end position="519"/>
    </location>
</feature>
<keyword id="KW-0175">Coiled coil</keyword>
<keyword id="KW-0509">mRNA transport</keyword>
<keyword id="KW-0906">Nuclear pore complex</keyword>
<keyword id="KW-0539">Nucleus</keyword>
<keyword id="KW-0653">Protein transport</keyword>
<keyword id="KW-1185">Reference proteome</keyword>
<keyword id="KW-0677">Repeat</keyword>
<keyword id="KW-0811">Translocation</keyword>
<keyword id="KW-0813">Transport</keyword>